<dbReference type="EC" id="2.4.2.17" evidence="1"/>
<dbReference type="EMBL" id="CP000828">
    <property type="protein sequence ID" value="ABW28976.1"/>
    <property type="molecule type" value="Genomic_DNA"/>
</dbReference>
<dbReference type="RefSeq" id="WP_012164332.1">
    <property type="nucleotide sequence ID" value="NC_009925.1"/>
</dbReference>
<dbReference type="SMR" id="B0C9G3"/>
<dbReference type="STRING" id="329726.AM1_3992"/>
<dbReference type="KEGG" id="amr:AM1_3992"/>
<dbReference type="eggNOG" id="COG0040">
    <property type="taxonomic scope" value="Bacteria"/>
</dbReference>
<dbReference type="HOGENOM" id="CLU_038115_2_0_3"/>
<dbReference type="OrthoDB" id="9801867at2"/>
<dbReference type="UniPathway" id="UPA00031">
    <property type="reaction ID" value="UER00006"/>
</dbReference>
<dbReference type="Proteomes" id="UP000000268">
    <property type="component" value="Chromosome"/>
</dbReference>
<dbReference type="GO" id="GO:0005737">
    <property type="term" value="C:cytoplasm"/>
    <property type="evidence" value="ECO:0007669"/>
    <property type="project" value="UniProtKB-SubCell"/>
</dbReference>
<dbReference type="GO" id="GO:0005524">
    <property type="term" value="F:ATP binding"/>
    <property type="evidence" value="ECO:0007669"/>
    <property type="project" value="UniProtKB-KW"/>
</dbReference>
<dbReference type="GO" id="GO:0003879">
    <property type="term" value="F:ATP phosphoribosyltransferase activity"/>
    <property type="evidence" value="ECO:0007669"/>
    <property type="project" value="UniProtKB-UniRule"/>
</dbReference>
<dbReference type="GO" id="GO:0000105">
    <property type="term" value="P:L-histidine biosynthetic process"/>
    <property type="evidence" value="ECO:0007669"/>
    <property type="project" value="UniProtKB-UniRule"/>
</dbReference>
<dbReference type="CDD" id="cd13595">
    <property type="entry name" value="PBP2_HisGs"/>
    <property type="match status" value="1"/>
</dbReference>
<dbReference type="FunFam" id="3.40.190.10:FF:000008">
    <property type="entry name" value="ATP phosphoribosyltransferase"/>
    <property type="match status" value="1"/>
</dbReference>
<dbReference type="Gene3D" id="3.40.190.10">
    <property type="entry name" value="Periplasmic binding protein-like II"/>
    <property type="match status" value="2"/>
</dbReference>
<dbReference type="HAMAP" id="MF_01018">
    <property type="entry name" value="HisG_Short"/>
    <property type="match status" value="1"/>
</dbReference>
<dbReference type="InterPro" id="IPR013820">
    <property type="entry name" value="ATP_PRibTrfase_cat"/>
</dbReference>
<dbReference type="InterPro" id="IPR018198">
    <property type="entry name" value="ATP_PRibTrfase_CS"/>
</dbReference>
<dbReference type="InterPro" id="IPR001348">
    <property type="entry name" value="ATP_PRibTrfase_HisG"/>
</dbReference>
<dbReference type="InterPro" id="IPR024893">
    <property type="entry name" value="ATP_PRibTrfase_HisG_short"/>
</dbReference>
<dbReference type="NCBIfam" id="TIGR00070">
    <property type="entry name" value="hisG"/>
    <property type="match status" value="1"/>
</dbReference>
<dbReference type="PANTHER" id="PTHR21403:SF8">
    <property type="entry name" value="ATP PHOSPHORIBOSYLTRANSFERASE"/>
    <property type="match status" value="1"/>
</dbReference>
<dbReference type="PANTHER" id="PTHR21403">
    <property type="entry name" value="ATP PHOSPHORIBOSYLTRANSFERASE ATP-PRTASE"/>
    <property type="match status" value="1"/>
</dbReference>
<dbReference type="Pfam" id="PF01634">
    <property type="entry name" value="HisG"/>
    <property type="match status" value="1"/>
</dbReference>
<dbReference type="SUPFAM" id="SSF53850">
    <property type="entry name" value="Periplasmic binding protein-like II"/>
    <property type="match status" value="1"/>
</dbReference>
<dbReference type="PROSITE" id="PS01316">
    <property type="entry name" value="ATP_P_PHORIBOSYLTR"/>
    <property type="match status" value="1"/>
</dbReference>
<protein>
    <recommendedName>
        <fullName evidence="1">ATP phosphoribosyltransferase</fullName>
        <shortName evidence="1">ATP-PRT</shortName>
        <shortName evidence="1">ATP-PRTase</shortName>
        <ecNumber evidence="1">2.4.2.17</ecNumber>
    </recommendedName>
</protein>
<accession>B0C9G3</accession>
<feature type="chain" id="PRO_1000084151" description="ATP phosphoribosyltransferase">
    <location>
        <begin position="1"/>
        <end position="218"/>
    </location>
</feature>
<sequence length="218" mass="23926">MLTVALPKGALLKDSIRLLQSVGLDFSAFLDSGNRQLQIQDPTQTAQGLLVRAQDVPVYVEYGQAQLGIVGFDVLQEKKPQVAQFADLGFGHCRMSVAVPSQSPYRSAMELPPNCRVASKFVHCAHDFFSKIDLPVEIIPLYGSVELGPITGMSEAIVDLVSTGRTLKENGLIELDCLYDSTARLIAHPLSYRLNQYNLEHWLNEISKNSQPLAAKAS</sequence>
<gene>
    <name evidence="1" type="primary">hisG</name>
    <name type="ordered locus">AM1_3992</name>
</gene>
<name>HIS1_ACAM1</name>
<evidence type="ECO:0000255" key="1">
    <source>
        <dbReference type="HAMAP-Rule" id="MF_01018"/>
    </source>
</evidence>
<comment type="function">
    <text evidence="1">Catalyzes the condensation of ATP and 5-phosphoribose 1-diphosphate to form N'-(5'-phosphoribosyl)-ATP (PR-ATP). Has a crucial role in the pathway because the rate of histidine biosynthesis seems to be controlled primarily by regulation of HisG enzymatic activity.</text>
</comment>
<comment type="catalytic activity">
    <reaction evidence="1">
        <text>1-(5-phospho-beta-D-ribosyl)-ATP + diphosphate = 5-phospho-alpha-D-ribose 1-diphosphate + ATP</text>
        <dbReference type="Rhea" id="RHEA:18473"/>
        <dbReference type="ChEBI" id="CHEBI:30616"/>
        <dbReference type="ChEBI" id="CHEBI:33019"/>
        <dbReference type="ChEBI" id="CHEBI:58017"/>
        <dbReference type="ChEBI" id="CHEBI:73183"/>
        <dbReference type="EC" id="2.4.2.17"/>
    </reaction>
</comment>
<comment type="pathway">
    <text evidence="1">Amino-acid biosynthesis; L-histidine biosynthesis; L-histidine from 5-phospho-alpha-D-ribose 1-diphosphate: step 1/9.</text>
</comment>
<comment type="subunit">
    <text evidence="1">Heteromultimer composed of HisG and HisZ subunits.</text>
</comment>
<comment type="subcellular location">
    <subcellularLocation>
        <location evidence="1">Cytoplasm</location>
    </subcellularLocation>
</comment>
<comment type="domain">
    <text>Lacks the C-terminal regulatory region which is replaced by HisZ.</text>
</comment>
<comment type="similarity">
    <text evidence="1">Belongs to the ATP phosphoribosyltransferase family. Short subfamily.</text>
</comment>
<proteinExistence type="inferred from homology"/>
<organism>
    <name type="scientific">Acaryochloris marina (strain MBIC 11017)</name>
    <dbReference type="NCBI Taxonomy" id="329726"/>
    <lineage>
        <taxon>Bacteria</taxon>
        <taxon>Bacillati</taxon>
        <taxon>Cyanobacteriota</taxon>
        <taxon>Cyanophyceae</taxon>
        <taxon>Acaryochloridales</taxon>
        <taxon>Acaryochloridaceae</taxon>
        <taxon>Acaryochloris</taxon>
    </lineage>
</organism>
<keyword id="KW-0028">Amino-acid biosynthesis</keyword>
<keyword id="KW-0067">ATP-binding</keyword>
<keyword id="KW-0963">Cytoplasm</keyword>
<keyword id="KW-0328">Glycosyltransferase</keyword>
<keyword id="KW-0368">Histidine biosynthesis</keyword>
<keyword id="KW-0547">Nucleotide-binding</keyword>
<keyword id="KW-1185">Reference proteome</keyword>
<keyword id="KW-0808">Transferase</keyword>
<reference key="1">
    <citation type="journal article" date="2008" name="Proc. Natl. Acad. Sci. U.S.A.">
        <title>Niche adaptation and genome expansion in the chlorophyll d-producing cyanobacterium Acaryochloris marina.</title>
        <authorList>
            <person name="Swingley W.D."/>
            <person name="Chen M."/>
            <person name="Cheung P.C."/>
            <person name="Conrad A.L."/>
            <person name="Dejesa L.C."/>
            <person name="Hao J."/>
            <person name="Honchak B.M."/>
            <person name="Karbach L.E."/>
            <person name="Kurdoglu A."/>
            <person name="Lahiri S."/>
            <person name="Mastrian S.D."/>
            <person name="Miyashita H."/>
            <person name="Page L."/>
            <person name="Ramakrishna P."/>
            <person name="Satoh S."/>
            <person name="Sattley W.M."/>
            <person name="Shimada Y."/>
            <person name="Taylor H.L."/>
            <person name="Tomo T."/>
            <person name="Tsuchiya T."/>
            <person name="Wang Z.T."/>
            <person name="Raymond J."/>
            <person name="Mimuro M."/>
            <person name="Blankenship R.E."/>
            <person name="Touchman J.W."/>
        </authorList>
    </citation>
    <scope>NUCLEOTIDE SEQUENCE [LARGE SCALE GENOMIC DNA]</scope>
    <source>
        <strain>MBIC 11017</strain>
    </source>
</reference>